<dbReference type="EMBL" id="CR378674">
    <property type="protein sequence ID" value="CAG21859.1"/>
    <property type="molecule type" value="Genomic_DNA"/>
</dbReference>
<dbReference type="RefSeq" id="WP_011220095.1">
    <property type="nucleotide sequence ID" value="NC_006370.1"/>
</dbReference>
<dbReference type="SMR" id="Q6LLG9"/>
<dbReference type="STRING" id="298386.PBPRA3603"/>
<dbReference type="KEGG" id="ppr:PBPRA3603"/>
<dbReference type="eggNOG" id="COG0355">
    <property type="taxonomic scope" value="Bacteria"/>
</dbReference>
<dbReference type="HOGENOM" id="CLU_084338_2_0_6"/>
<dbReference type="Proteomes" id="UP000000593">
    <property type="component" value="Chromosome 1"/>
</dbReference>
<dbReference type="GO" id="GO:0005886">
    <property type="term" value="C:plasma membrane"/>
    <property type="evidence" value="ECO:0007669"/>
    <property type="project" value="UniProtKB-SubCell"/>
</dbReference>
<dbReference type="GO" id="GO:0045259">
    <property type="term" value="C:proton-transporting ATP synthase complex"/>
    <property type="evidence" value="ECO:0007669"/>
    <property type="project" value="UniProtKB-KW"/>
</dbReference>
<dbReference type="GO" id="GO:0005524">
    <property type="term" value="F:ATP binding"/>
    <property type="evidence" value="ECO:0007669"/>
    <property type="project" value="UniProtKB-UniRule"/>
</dbReference>
<dbReference type="GO" id="GO:0046933">
    <property type="term" value="F:proton-transporting ATP synthase activity, rotational mechanism"/>
    <property type="evidence" value="ECO:0007669"/>
    <property type="project" value="UniProtKB-UniRule"/>
</dbReference>
<dbReference type="CDD" id="cd12152">
    <property type="entry name" value="F1-ATPase_delta"/>
    <property type="match status" value="1"/>
</dbReference>
<dbReference type="FunFam" id="1.20.5.440:FF:000001">
    <property type="entry name" value="ATP synthase epsilon chain"/>
    <property type="match status" value="1"/>
</dbReference>
<dbReference type="FunFam" id="2.60.15.10:FF:000001">
    <property type="entry name" value="ATP synthase epsilon chain"/>
    <property type="match status" value="1"/>
</dbReference>
<dbReference type="Gene3D" id="1.20.5.440">
    <property type="entry name" value="ATP synthase delta/epsilon subunit, C-terminal domain"/>
    <property type="match status" value="1"/>
</dbReference>
<dbReference type="Gene3D" id="2.60.15.10">
    <property type="entry name" value="F0F1 ATP synthase delta/epsilon subunit, N-terminal"/>
    <property type="match status" value="1"/>
</dbReference>
<dbReference type="HAMAP" id="MF_00530">
    <property type="entry name" value="ATP_synth_epsil_bac"/>
    <property type="match status" value="1"/>
</dbReference>
<dbReference type="InterPro" id="IPR036794">
    <property type="entry name" value="ATP_F1_dsu/esu_C_sf"/>
</dbReference>
<dbReference type="InterPro" id="IPR001469">
    <property type="entry name" value="ATP_synth_F1_dsu/esu"/>
</dbReference>
<dbReference type="InterPro" id="IPR020546">
    <property type="entry name" value="ATP_synth_F1_dsu/esu_N"/>
</dbReference>
<dbReference type="InterPro" id="IPR020547">
    <property type="entry name" value="ATP_synth_F1_esu_C"/>
</dbReference>
<dbReference type="InterPro" id="IPR036771">
    <property type="entry name" value="ATPsynth_dsu/esu_N"/>
</dbReference>
<dbReference type="NCBIfam" id="TIGR01216">
    <property type="entry name" value="ATP_synt_epsi"/>
    <property type="match status" value="1"/>
</dbReference>
<dbReference type="NCBIfam" id="NF001847">
    <property type="entry name" value="PRK00571.1-4"/>
    <property type="match status" value="1"/>
</dbReference>
<dbReference type="PANTHER" id="PTHR13822">
    <property type="entry name" value="ATP SYNTHASE DELTA/EPSILON CHAIN"/>
    <property type="match status" value="1"/>
</dbReference>
<dbReference type="PANTHER" id="PTHR13822:SF10">
    <property type="entry name" value="ATP SYNTHASE EPSILON CHAIN, CHLOROPLASTIC"/>
    <property type="match status" value="1"/>
</dbReference>
<dbReference type="Pfam" id="PF00401">
    <property type="entry name" value="ATP-synt_DE"/>
    <property type="match status" value="1"/>
</dbReference>
<dbReference type="Pfam" id="PF02823">
    <property type="entry name" value="ATP-synt_DE_N"/>
    <property type="match status" value="1"/>
</dbReference>
<dbReference type="SUPFAM" id="SSF46604">
    <property type="entry name" value="Epsilon subunit of F1F0-ATP synthase C-terminal domain"/>
    <property type="match status" value="1"/>
</dbReference>
<dbReference type="SUPFAM" id="SSF51344">
    <property type="entry name" value="Epsilon subunit of F1F0-ATP synthase N-terminal domain"/>
    <property type="match status" value="1"/>
</dbReference>
<name>ATPE1_PHOPR</name>
<comment type="function">
    <text evidence="1">Produces ATP from ADP in the presence of a proton gradient across the membrane.</text>
</comment>
<comment type="subunit">
    <text>F-type ATPases have 2 components, CF(1) - the catalytic core - and CF(0) - the membrane proton channel. CF(1) has five subunits: alpha(3), beta(3), gamma(1), delta(1), epsilon(1). CF(0) has three main subunits: a, b and c.</text>
</comment>
<comment type="subcellular location">
    <subcellularLocation>
        <location evidence="1">Cell inner membrane</location>
        <topology evidence="1">Peripheral membrane protein</topology>
    </subcellularLocation>
</comment>
<comment type="similarity">
    <text evidence="1">Belongs to the ATPase epsilon chain family.</text>
</comment>
<organism>
    <name type="scientific">Photobacterium profundum (strain SS9)</name>
    <dbReference type="NCBI Taxonomy" id="298386"/>
    <lineage>
        <taxon>Bacteria</taxon>
        <taxon>Pseudomonadati</taxon>
        <taxon>Pseudomonadota</taxon>
        <taxon>Gammaproteobacteria</taxon>
        <taxon>Vibrionales</taxon>
        <taxon>Vibrionaceae</taxon>
        <taxon>Photobacterium</taxon>
    </lineage>
</organism>
<evidence type="ECO:0000255" key="1">
    <source>
        <dbReference type="HAMAP-Rule" id="MF_00530"/>
    </source>
</evidence>
<feature type="chain" id="PRO_0000265854" description="ATP synthase epsilon chain 1">
    <location>
        <begin position="1"/>
        <end position="140"/>
    </location>
</feature>
<gene>
    <name evidence="1" type="primary">atpC1</name>
    <name type="ordered locus">PBPRA3603</name>
</gene>
<proteinExistence type="inferred from homology"/>
<accession>Q6LLG9</accession>
<keyword id="KW-0066">ATP synthesis</keyword>
<keyword id="KW-0997">Cell inner membrane</keyword>
<keyword id="KW-1003">Cell membrane</keyword>
<keyword id="KW-0139">CF(1)</keyword>
<keyword id="KW-0375">Hydrogen ion transport</keyword>
<keyword id="KW-0406">Ion transport</keyword>
<keyword id="KW-0472">Membrane</keyword>
<keyword id="KW-1185">Reference proteome</keyword>
<keyword id="KW-0813">Transport</keyword>
<protein>
    <recommendedName>
        <fullName evidence="1">ATP synthase epsilon chain 1</fullName>
    </recommendedName>
    <alternativeName>
        <fullName evidence="1">ATP synthase F1 sector epsilon subunit 1</fullName>
    </alternativeName>
    <alternativeName>
        <fullName evidence="1">F-ATPase epsilon subunit 1</fullName>
    </alternativeName>
</protein>
<reference key="1">
    <citation type="journal article" date="2005" name="Science">
        <title>Life at depth: Photobacterium profundum genome sequence and expression analysis.</title>
        <authorList>
            <person name="Vezzi A."/>
            <person name="Campanaro S."/>
            <person name="D'Angelo M."/>
            <person name="Simonato F."/>
            <person name="Vitulo N."/>
            <person name="Lauro F.M."/>
            <person name="Cestaro A."/>
            <person name="Malacrida G."/>
            <person name="Simionati B."/>
            <person name="Cannata N."/>
            <person name="Romualdi C."/>
            <person name="Bartlett D.H."/>
            <person name="Valle G."/>
        </authorList>
    </citation>
    <scope>NUCLEOTIDE SEQUENCE [LARGE SCALE GENOMIC DNA]</scope>
    <source>
        <strain>ATCC BAA-1253 / SS9</strain>
    </source>
</reference>
<sequence>MAAITFHLDVVSAEKKLFSGRAESVQVSGSEGELGIHAGHTPLLTAITPGMVRIIKQHGEEEIIYLSGGMLEVQPSTVTVLTDTAIRGEDLDAAKAAEAKRQAEEQIRNQHGDIDFAQAASDLAKAIAQLRVIELTKKSR</sequence>